<reference key="1">
    <citation type="journal article" date="2000" name="Anal. Biochem.">
        <title>A method for the large-scale cloning of nuclear proteins and nuclear targeting sequences on a functional basis.</title>
        <authorList>
            <person name="Pichon B."/>
            <person name="Mercan D."/>
            <person name="Pouillon V."/>
            <person name="Christophe-Hobertus C."/>
            <person name="Christophe D."/>
        </authorList>
    </citation>
    <scope>NUCLEOTIDE SEQUENCE [LARGE SCALE MRNA]</scope>
    <scope>SUBCELLULAR LOCATION</scope>
    <source>
        <tissue>Thyroid</tissue>
    </source>
</reference>
<organism>
    <name type="scientific">Canis lupus familiaris</name>
    <name type="common">Dog</name>
    <name type="synonym">Canis familiaris</name>
    <dbReference type="NCBI Taxonomy" id="9615"/>
    <lineage>
        <taxon>Eukaryota</taxon>
        <taxon>Metazoa</taxon>
        <taxon>Chordata</taxon>
        <taxon>Craniata</taxon>
        <taxon>Vertebrata</taxon>
        <taxon>Euteleostomi</taxon>
        <taxon>Mammalia</taxon>
        <taxon>Eutheria</taxon>
        <taxon>Laurasiatheria</taxon>
        <taxon>Carnivora</taxon>
        <taxon>Caniformia</taxon>
        <taxon>Canidae</taxon>
        <taxon>Canis</taxon>
    </lineage>
</organism>
<comment type="function">
    <text evidence="1">May be involved in transcriptional regulation.</text>
</comment>
<comment type="subcellular location">
    <subcellularLocation>
        <location evidence="5">Nucleus</location>
    </subcellularLocation>
</comment>
<comment type="similarity">
    <text evidence="6">Belongs to the krueppel C2H2-type zinc-finger protein family.</text>
</comment>
<dbReference type="EMBL" id="AJ388557">
    <property type="protein sequence ID" value="CAB46856.1"/>
    <property type="molecule type" value="mRNA"/>
</dbReference>
<dbReference type="RefSeq" id="NP_001002954.1">
    <property type="nucleotide sequence ID" value="NM_001002954.1"/>
</dbReference>
<dbReference type="SMR" id="Q9XSR1"/>
<dbReference type="STRING" id="9615.ENSCAFP00000053906"/>
<dbReference type="PaxDb" id="9612-ENSCAFP00000002451"/>
<dbReference type="GeneID" id="403421"/>
<dbReference type="KEGG" id="cfa:403421"/>
<dbReference type="CTD" id="403421"/>
<dbReference type="eggNOG" id="KOG1721">
    <property type="taxonomic scope" value="Eukaryota"/>
</dbReference>
<dbReference type="InParanoid" id="Q9XSR1"/>
<dbReference type="OrthoDB" id="9331at33554"/>
<dbReference type="Proteomes" id="UP000002254">
    <property type="component" value="Unplaced"/>
</dbReference>
<dbReference type="Proteomes" id="UP000694429">
    <property type="component" value="Unplaced"/>
</dbReference>
<dbReference type="Proteomes" id="UP000694542">
    <property type="component" value="Unplaced"/>
</dbReference>
<dbReference type="Proteomes" id="UP000805418">
    <property type="component" value="Unplaced"/>
</dbReference>
<dbReference type="GO" id="GO:0005634">
    <property type="term" value="C:nucleus"/>
    <property type="evidence" value="ECO:0000318"/>
    <property type="project" value="GO_Central"/>
</dbReference>
<dbReference type="GO" id="GO:0000981">
    <property type="term" value="F:DNA-binding transcription factor activity, RNA polymerase II-specific"/>
    <property type="evidence" value="ECO:0000318"/>
    <property type="project" value="GO_Central"/>
</dbReference>
<dbReference type="GO" id="GO:0000978">
    <property type="term" value="F:RNA polymerase II cis-regulatory region sequence-specific DNA binding"/>
    <property type="evidence" value="ECO:0000318"/>
    <property type="project" value="GO_Central"/>
</dbReference>
<dbReference type="GO" id="GO:0008270">
    <property type="term" value="F:zinc ion binding"/>
    <property type="evidence" value="ECO:0007669"/>
    <property type="project" value="UniProtKB-KW"/>
</dbReference>
<dbReference type="GO" id="GO:0006357">
    <property type="term" value="P:regulation of transcription by RNA polymerase II"/>
    <property type="evidence" value="ECO:0000318"/>
    <property type="project" value="GO_Central"/>
</dbReference>
<dbReference type="CDD" id="cd07765">
    <property type="entry name" value="KRAB_A-box"/>
    <property type="match status" value="1"/>
</dbReference>
<dbReference type="FunFam" id="3.30.160.60:FF:000040">
    <property type="entry name" value="RB associated KRAB zinc finger"/>
    <property type="match status" value="1"/>
</dbReference>
<dbReference type="FunFam" id="3.30.160.60:FF:000002">
    <property type="entry name" value="Zinc finger protein 1 homolog"/>
    <property type="match status" value="1"/>
</dbReference>
<dbReference type="FunFam" id="3.30.160.60:FF:000824">
    <property type="entry name" value="Zinc finger protein 184"/>
    <property type="match status" value="1"/>
</dbReference>
<dbReference type="FunFam" id="3.30.160.60:FF:000295">
    <property type="entry name" value="zinc finger protein 19"/>
    <property type="match status" value="1"/>
</dbReference>
<dbReference type="FunFam" id="3.30.160.60:FF:002519">
    <property type="entry name" value="zinc finger protein 252-like"/>
    <property type="match status" value="1"/>
</dbReference>
<dbReference type="FunFam" id="3.30.160.60:FF:000269">
    <property type="entry name" value="Zinc finger protein 287"/>
    <property type="match status" value="1"/>
</dbReference>
<dbReference type="FunFam" id="3.30.160.60:FF:000352">
    <property type="entry name" value="zinc finger protein 3 homolog"/>
    <property type="match status" value="1"/>
</dbReference>
<dbReference type="FunFam" id="3.30.160.60:FF:002343">
    <property type="entry name" value="Zinc finger protein 33A"/>
    <property type="match status" value="4"/>
</dbReference>
<dbReference type="FunFam" id="3.30.160.60:FF:000016">
    <property type="entry name" value="zinc finger protein 37 homolog"/>
    <property type="match status" value="1"/>
</dbReference>
<dbReference type="FunFam" id="3.30.160.60:FF:000842">
    <property type="entry name" value="Zinc finger protein 383"/>
    <property type="match status" value="1"/>
</dbReference>
<dbReference type="FunFam" id="3.30.160.60:FF:001498">
    <property type="entry name" value="Zinc finger protein 404"/>
    <property type="match status" value="1"/>
</dbReference>
<dbReference type="FunFam" id="3.30.160.60:FF:002254">
    <property type="entry name" value="Zinc finger protein 540"/>
    <property type="match status" value="1"/>
</dbReference>
<dbReference type="FunFam" id="3.30.160.60:FF:000737">
    <property type="entry name" value="Zinc finger protein 565"/>
    <property type="match status" value="1"/>
</dbReference>
<dbReference type="FunFam" id="3.30.160.60:FF:001239">
    <property type="entry name" value="Zinc finger protein 615"/>
    <property type="match status" value="1"/>
</dbReference>
<dbReference type="FunFam" id="3.30.160.60:FF:000495">
    <property type="entry name" value="zinc finger protein 668"/>
    <property type="match status" value="1"/>
</dbReference>
<dbReference type="FunFam" id="3.30.160.60:FF:000953">
    <property type="entry name" value="Zinc finger protein 691"/>
    <property type="match status" value="1"/>
</dbReference>
<dbReference type="Gene3D" id="6.10.140.140">
    <property type="match status" value="1"/>
</dbReference>
<dbReference type="Gene3D" id="3.30.160.60">
    <property type="entry name" value="Classic Zinc Finger"/>
    <property type="match status" value="19"/>
</dbReference>
<dbReference type="InterPro" id="IPR001909">
    <property type="entry name" value="KRAB"/>
</dbReference>
<dbReference type="InterPro" id="IPR036051">
    <property type="entry name" value="KRAB_dom_sf"/>
</dbReference>
<dbReference type="InterPro" id="IPR036236">
    <property type="entry name" value="Znf_C2H2_sf"/>
</dbReference>
<dbReference type="InterPro" id="IPR013087">
    <property type="entry name" value="Znf_C2H2_type"/>
</dbReference>
<dbReference type="PANTHER" id="PTHR23235:SF178">
    <property type="entry name" value="C2H2-TYPE DOMAIN-CONTAINING PROTEIN-RELATED"/>
    <property type="match status" value="1"/>
</dbReference>
<dbReference type="PANTHER" id="PTHR23235">
    <property type="entry name" value="KRUEPPEL-LIKE TRANSCRIPTION FACTOR"/>
    <property type="match status" value="1"/>
</dbReference>
<dbReference type="Pfam" id="PF01352">
    <property type="entry name" value="KRAB"/>
    <property type="match status" value="1"/>
</dbReference>
<dbReference type="Pfam" id="PF00096">
    <property type="entry name" value="zf-C2H2"/>
    <property type="match status" value="17"/>
</dbReference>
<dbReference type="Pfam" id="PF13912">
    <property type="entry name" value="zf-C2H2_6"/>
    <property type="match status" value="1"/>
</dbReference>
<dbReference type="SMART" id="SM00349">
    <property type="entry name" value="KRAB"/>
    <property type="match status" value="1"/>
</dbReference>
<dbReference type="SMART" id="SM00355">
    <property type="entry name" value="ZnF_C2H2"/>
    <property type="match status" value="21"/>
</dbReference>
<dbReference type="SUPFAM" id="SSF57667">
    <property type="entry name" value="beta-beta-alpha zinc fingers"/>
    <property type="match status" value="12"/>
</dbReference>
<dbReference type="SUPFAM" id="SSF109640">
    <property type="entry name" value="KRAB domain (Kruppel-associated box)"/>
    <property type="match status" value="1"/>
</dbReference>
<dbReference type="PROSITE" id="PS50805">
    <property type="entry name" value="KRAB"/>
    <property type="match status" value="1"/>
</dbReference>
<dbReference type="PROSITE" id="PS00028">
    <property type="entry name" value="ZINC_FINGER_C2H2_1"/>
    <property type="match status" value="18"/>
</dbReference>
<dbReference type="PROSITE" id="PS50157">
    <property type="entry name" value="ZINC_FINGER_C2H2_2"/>
    <property type="match status" value="20"/>
</dbReference>
<evidence type="ECO:0000250" key="1"/>
<evidence type="ECO:0000255" key="2">
    <source>
        <dbReference type="PROSITE-ProRule" id="PRU00042"/>
    </source>
</evidence>
<evidence type="ECO:0000255" key="3">
    <source>
        <dbReference type="PROSITE-ProRule" id="PRU00119"/>
    </source>
</evidence>
<evidence type="ECO:0000256" key="4">
    <source>
        <dbReference type="SAM" id="MobiDB-lite"/>
    </source>
</evidence>
<evidence type="ECO:0000269" key="5">
    <source>
    </source>
</evidence>
<evidence type="ECO:0000305" key="6"/>
<feature type="chain" id="PRO_0000348064" description="Zinc finger protein 252">
    <location>
        <begin position="1"/>
        <end position="873"/>
    </location>
</feature>
<feature type="domain" description="KRAB" evidence="3">
    <location>
        <begin position="15"/>
        <end position="86"/>
    </location>
</feature>
<feature type="zinc finger region" description="C2H2-type 1" evidence="2">
    <location>
        <begin position="265"/>
        <end position="287"/>
    </location>
</feature>
<feature type="zinc finger region" description="C2H2-type 2" evidence="2">
    <location>
        <begin position="291"/>
        <end position="315"/>
    </location>
</feature>
<feature type="zinc finger region" description="C2H2-type 3; degenerate" evidence="2">
    <location>
        <begin position="321"/>
        <end position="343"/>
    </location>
</feature>
<feature type="zinc finger region" description="C2H2-type 4" evidence="2">
    <location>
        <begin position="372"/>
        <end position="394"/>
    </location>
</feature>
<feature type="zinc finger region" description="C2H2-type 5" evidence="2">
    <location>
        <begin position="400"/>
        <end position="422"/>
    </location>
</feature>
<feature type="zinc finger region" description="C2H2-type 6" evidence="2">
    <location>
        <begin position="428"/>
        <end position="450"/>
    </location>
</feature>
<feature type="zinc finger region" description="C2H2-type 7" evidence="2">
    <location>
        <begin position="456"/>
        <end position="478"/>
    </location>
</feature>
<feature type="zinc finger region" description="C2H2-type 8" evidence="2">
    <location>
        <begin position="484"/>
        <end position="506"/>
    </location>
</feature>
<feature type="zinc finger region" description="C2H2-type 9" evidence="2">
    <location>
        <begin position="512"/>
        <end position="534"/>
    </location>
</feature>
<feature type="zinc finger region" description="C2H2-type 10" evidence="2">
    <location>
        <begin position="540"/>
        <end position="562"/>
    </location>
</feature>
<feature type="zinc finger region" description="C2H2-type 11" evidence="2">
    <location>
        <begin position="568"/>
        <end position="590"/>
    </location>
</feature>
<feature type="zinc finger region" description="C2H2-type 12" evidence="2">
    <location>
        <begin position="596"/>
        <end position="618"/>
    </location>
</feature>
<feature type="zinc finger region" description="C2H2-type 13" evidence="2">
    <location>
        <begin position="624"/>
        <end position="646"/>
    </location>
</feature>
<feature type="zinc finger region" description="C2H2-type 14" evidence="2">
    <location>
        <begin position="652"/>
        <end position="674"/>
    </location>
</feature>
<feature type="zinc finger region" description="C2H2-type 15" evidence="2">
    <location>
        <begin position="680"/>
        <end position="702"/>
    </location>
</feature>
<feature type="zinc finger region" description="C2H2-type 16" evidence="2">
    <location>
        <begin position="708"/>
        <end position="730"/>
    </location>
</feature>
<feature type="zinc finger region" description="C2H2-type 17" evidence="2">
    <location>
        <begin position="736"/>
        <end position="758"/>
    </location>
</feature>
<feature type="zinc finger region" description="C2H2-type 18" evidence="2">
    <location>
        <begin position="764"/>
        <end position="786"/>
    </location>
</feature>
<feature type="zinc finger region" description="C2H2-type 19" evidence="2">
    <location>
        <begin position="792"/>
        <end position="814"/>
    </location>
</feature>
<feature type="zinc finger region" description="C2H2-type 20" evidence="2">
    <location>
        <begin position="820"/>
        <end position="842"/>
    </location>
</feature>
<feature type="region of interest" description="Disordered" evidence="4">
    <location>
        <begin position="145"/>
        <end position="184"/>
    </location>
</feature>
<feature type="compositionally biased region" description="Polar residues" evidence="4">
    <location>
        <begin position="157"/>
        <end position="167"/>
    </location>
</feature>
<proteinExistence type="evidence at transcript level"/>
<accession>Q9XSR1</accession>
<protein>
    <recommendedName>
        <fullName>Zinc finger protein 252</fullName>
    </recommendedName>
</protein>
<keyword id="KW-0238">DNA-binding</keyword>
<keyword id="KW-0479">Metal-binding</keyword>
<keyword id="KW-0539">Nucleus</keyword>
<keyword id="KW-1185">Reference proteome</keyword>
<keyword id="KW-0677">Repeat</keyword>
<keyword id="KW-0804">Transcription</keyword>
<keyword id="KW-0805">Transcription regulation</keyword>
<keyword id="KW-0862">Zinc</keyword>
<keyword id="KW-0863">Zinc-finger</keyword>
<name>ZN252_CANLF</name>
<gene>
    <name type="primary">ZNF252</name>
    <name type="ORF">BC3</name>
</gene>
<sequence length="873" mass="99448">MAVKQLLPAGSQVLVSFEDVAVLLSREEWGRLGPAQRGLYSDVMLETYRNLISLGLQGSKPDVISRLEKGEEPWAPYSAKIEESWIRSHESESFQSLMEKKGLTPKQEISKAMGFRRAKSEYVRNVSKESEFEEMNKTKGKLKNYRKKSAEEELKKSFSQKNSSRPVTLTHVKSPVSGKGQKSSSLEVDYTVDASPVRFHRASTGGSLHQNVPCVNDFQQSQDLINLQCLHLGERACQTDLFMKAPRQSSVLSENQRVNNPEKSFECTECRRLFSPSKALSQHQRSHTGEIPCESGGCGRTSHHCSVLSQHQEVHHGGESHTCAECGKAFKAHSYFIQQHNTHTGERPYECSECAHLSYSQHLQIHSGQKPHECSQCGKAFSHSSNLFHHQRIHSGEKPYECKECGKAFGRHSHLLQHKRIHSGEKPYDCTECGKAFSARLSLIQHQRTHTGEKPYECNECGKSFSLNRTLIVHQRIHTGEKPYRCNECGKSFSQRAQVIQHKRIHTGEKPYVCNECGKSFSARLSLIQHQRIHTGEKPYGCSECGKTFSQKGHLIQHQRIHTGEKPYECNECGKAFSQSFNLIHHQRTHNGEKPYECNECDKAFSVLSSLVQHQRVHNGEKPYECHKCGKAFSQGSHLIQHQRSHTGEKPYECNECGKTFGQISTLIKHERTHNGEKPYECGDCGKAFSQSAHLVRHRRIHTGENPYECSDCGKAFNVRSSLVQHHRIHTGEKPYECEKCGKAFSQHSQFIQHQRIHTGEKPYICNECEKAFSARLSLIQHKRIHTGEKPYKCTECGKSFRQSSHLIRHQRVHSGERPYMCNECGKTFSQRITLTSHEKTHTREQAYKCVKREDLLTAQSASIQHHKVHNGE</sequence>